<comment type="function">
    <text evidence="1">Catalyzes the reversible adenylation of nicotinate mononucleotide (NaMN) to nicotinic acid adenine dinucleotide (NaAD).</text>
</comment>
<comment type="catalytic activity">
    <reaction evidence="1">
        <text>nicotinate beta-D-ribonucleotide + ATP + H(+) = deamido-NAD(+) + diphosphate</text>
        <dbReference type="Rhea" id="RHEA:22860"/>
        <dbReference type="ChEBI" id="CHEBI:15378"/>
        <dbReference type="ChEBI" id="CHEBI:30616"/>
        <dbReference type="ChEBI" id="CHEBI:33019"/>
        <dbReference type="ChEBI" id="CHEBI:57502"/>
        <dbReference type="ChEBI" id="CHEBI:58437"/>
        <dbReference type="EC" id="2.7.7.18"/>
    </reaction>
</comment>
<comment type="pathway">
    <text evidence="1">Cofactor biosynthesis; NAD(+) biosynthesis; deamido-NAD(+) from nicotinate D-ribonucleotide: step 1/1.</text>
</comment>
<comment type="similarity">
    <text evidence="1">Belongs to the NadD family.</text>
</comment>
<accession>Q5QYC8</accession>
<reference key="1">
    <citation type="journal article" date="2004" name="Proc. Natl. Acad. Sci. U.S.A.">
        <title>Genome sequence of the deep-sea gamma-proteobacterium Idiomarina loihiensis reveals amino acid fermentation as a source of carbon and energy.</title>
        <authorList>
            <person name="Hou S."/>
            <person name="Saw J.H."/>
            <person name="Lee K.S."/>
            <person name="Freitas T.A."/>
            <person name="Belisle C."/>
            <person name="Kawarabayasi Y."/>
            <person name="Donachie S.P."/>
            <person name="Pikina A."/>
            <person name="Galperin M.Y."/>
            <person name="Koonin E.V."/>
            <person name="Makarova K.S."/>
            <person name="Omelchenko M.V."/>
            <person name="Sorokin A."/>
            <person name="Wolf Y.I."/>
            <person name="Li Q.X."/>
            <person name="Keum Y.S."/>
            <person name="Campbell S."/>
            <person name="Denery J."/>
            <person name="Aizawa S."/>
            <person name="Shibata S."/>
            <person name="Malahoff A."/>
            <person name="Alam M."/>
        </authorList>
    </citation>
    <scope>NUCLEOTIDE SEQUENCE [LARGE SCALE GENOMIC DNA]</scope>
    <source>
        <strain>ATCC BAA-735 / DSM 15497 / L2-TR</strain>
    </source>
</reference>
<gene>
    <name evidence="1" type="primary">nadD</name>
    <name type="ordered locus">IL0950</name>
</gene>
<protein>
    <recommendedName>
        <fullName evidence="1">Probable nicotinate-nucleotide adenylyltransferase</fullName>
        <ecNumber evidence="1">2.7.7.18</ecNumber>
    </recommendedName>
    <alternativeName>
        <fullName evidence="1">Deamido-NAD(+) diphosphorylase</fullName>
    </alternativeName>
    <alternativeName>
        <fullName evidence="1">Deamido-NAD(+) pyrophosphorylase</fullName>
    </alternativeName>
    <alternativeName>
        <fullName evidence="1">Nicotinate mononucleotide adenylyltransferase</fullName>
        <shortName evidence="1">NaMN adenylyltransferase</shortName>
    </alternativeName>
</protein>
<dbReference type="EC" id="2.7.7.18" evidence="1"/>
<dbReference type="EMBL" id="AE017340">
    <property type="protein sequence ID" value="AAV81790.1"/>
    <property type="molecule type" value="Genomic_DNA"/>
</dbReference>
<dbReference type="RefSeq" id="WP_011234201.1">
    <property type="nucleotide sequence ID" value="NC_006512.1"/>
</dbReference>
<dbReference type="SMR" id="Q5QYC8"/>
<dbReference type="STRING" id="283942.IL0950"/>
<dbReference type="GeneID" id="41336110"/>
<dbReference type="KEGG" id="ilo:IL0950"/>
<dbReference type="eggNOG" id="COG1057">
    <property type="taxonomic scope" value="Bacteria"/>
</dbReference>
<dbReference type="HOGENOM" id="CLU_069765_0_0_6"/>
<dbReference type="OrthoDB" id="5295945at2"/>
<dbReference type="UniPathway" id="UPA00253">
    <property type="reaction ID" value="UER00332"/>
</dbReference>
<dbReference type="Proteomes" id="UP000001171">
    <property type="component" value="Chromosome"/>
</dbReference>
<dbReference type="GO" id="GO:0005524">
    <property type="term" value="F:ATP binding"/>
    <property type="evidence" value="ECO:0007669"/>
    <property type="project" value="UniProtKB-KW"/>
</dbReference>
<dbReference type="GO" id="GO:0004515">
    <property type="term" value="F:nicotinate-nucleotide adenylyltransferase activity"/>
    <property type="evidence" value="ECO:0007669"/>
    <property type="project" value="UniProtKB-UniRule"/>
</dbReference>
<dbReference type="GO" id="GO:0009435">
    <property type="term" value="P:NAD biosynthetic process"/>
    <property type="evidence" value="ECO:0007669"/>
    <property type="project" value="UniProtKB-UniRule"/>
</dbReference>
<dbReference type="CDD" id="cd02165">
    <property type="entry name" value="NMNAT"/>
    <property type="match status" value="1"/>
</dbReference>
<dbReference type="Gene3D" id="3.40.50.620">
    <property type="entry name" value="HUPs"/>
    <property type="match status" value="1"/>
</dbReference>
<dbReference type="HAMAP" id="MF_00244">
    <property type="entry name" value="NaMN_adenylyltr"/>
    <property type="match status" value="1"/>
</dbReference>
<dbReference type="InterPro" id="IPR004821">
    <property type="entry name" value="Cyt_trans-like"/>
</dbReference>
<dbReference type="InterPro" id="IPR005248">
    <property type="entry name" value="NadD/NMNAT"/>
</dbReference>
<dbReference type="InterPro" id="IPR014729">
    <property type="entry name" value="Rossmann-like_a/b/a_fold"/>
</dbReference>
<dbReference type="NCBIfam" id="TIGR00125">
    <property type="entry name" value="cyt_tran_rel"/>
    <property type="match status" value="1"/>
</dbReference>
<dbReference type="NCBIfam" id="TIGR00482">
    <property type="entry name" value="nicotinate (nicotinamide) nucleotide adenylyltransferase"/>
    <property type="match status" value="1"/>
</dbReference>
<dbReference type="NCBIfam" id="NF000839">
    <property type="entry name" value="PRK00071.1-1"/>
    <property type="match status" value="1"/>
</dbReference>
<dbReference type="PANTHER" id="PTHR39321">
    <property type="entry name" value="NICOTINATE-NUCLEOTIDE ADENYLYLTRANSFERASE-RELATED"/>
    <property type="match status" value="1"/>
</dbReference>
<dbReference type="PANTHER" id="PTHR39321:SF3">
    <property type="entry name" value="PHOSPHOPANTETHEINE ADENYLYLTRANSFERASE"/>
    <property type="match status" value="1"/>
</dbReference>
<dbReference type="Pfam" id="PF01467">
    <property type="entry name" value="CTP_transf_like"/>
    <property type="match status" value="1"/>
</dbReference>
<dbReference type="SUPFAM" id="SSF52374">
    <property type="entry name" value="Nucleotidylyl transferase"/>
    <property type="match status" value="1"/>
</dbReference>
<sequence>MIRAIFGGTFDPIHNGHLQTAAALVKELGISTLALMPSAVPPHRPQPDASPEQRLDMVKLASQYHKAFTVEDWELRQDRPSFTANTLSEFKTQFPDDTLLFVMGMDSLMSLHRWHHWCQLIECAHLVVMPRAGVPFNPKNDELKEFISVHLTRDKNALNTQSQGLLYIAETPMVDVSATELRKQLQQREKNLPLPSNVYNYIRQHQLYL</sequence>
<name>NADD_IDILO</name>
<evidence type="ECO:0000255" key="1">
    <source>
        <dbReference type="HAMAP-Rule" id="MF_00244"/>
    </source>
</evidence>
<proteinExistence type="inferred from homology"/>
<organism>
    <name type="scientific">Idiomarina loihiensis (strain ATCC BAA-735 / DSM 15497 / L2-TR)</name>
    <dbReference type="NCBI Taxonomy" id="283942"/>
    <lineage>
        <taxon>Bacteria</taxon>
        <taxon>Pseudomonadati</taxon>
        <taxon>Pseudomonadota</taxon>
        <taxon>Gammaproteobacteria</taxon>
        <taxon>Alteromonadales</taxon>
        <taxon>Idiomarinaceae</taxon>
        <taxon>Idiomarina</taxon>
    </lineage>
</organism>
<feature type="chain" id="PRO_0000310120" description="Probable nicotinate-nucleotide adenylyltransferase">
    <location>
        <begin position="1"/>
        <end position="209"/>
    </location>
</feature>
<keyword id="KW-0067">ATP-binding</keyword>
<keyword id="KW-0520">NAD</keyword>
<keyword id="KW-0547">Nucleotide-binding</keyword>
<keyword id="KW-0548">Nucleotidyltransferase</keyword>
<keyword id="KW-0662">Pyridine nucleotide biosynthesis</keyword>
<keyword id="KW-1185">Reference proteome</keyword>
<keyword id="KW-0808">Transferase</keyword>